<reference key="1">
    <citation type="journal article" date="2001" name="Nature">
        <title>Complete genome sequence of a multiple drug resistant Salmonella enterica serovar Typhi CT18.</title>
        <authorList>
            <person name="Parkhill J."/>
            <person name="Dougan G."/>
            <person name="James K.D."/>
            <person name="Thomson N.R."/>
            <person name="Pickard D."/>
            <person name="Wain J."/>
            <person name="Churcher C.M."/>
            <person name="Mungall K.L."/>
            <person name="Bentley S.D."/>
            <person name="Holden M.T.G."/>
            <person name="Sebaihia M."/>
            <person name="Baker S."/>
            <person name="Basham D."/>
            <person name="Brooks K."/>
            <person name="Chillingworth T."/>
            <person name="Connerton P."/>
            <person name="Cronin A."/>
            <person name="Davis P."/>
            <person name="Davies R.M."/>
            <person name="Dowd L."/>
            <person name="White N."/>
            <person name="Farrar J."/>
            <person name="Feltwell T."/>
            <person name="Hamlin N."/>
            <person name="Haque A."/>
            <person name="Hien T.T."/>
            <person name="Holroyd S."/>
            <person name="Jagels K."/>
            <person name="Krogh A."/>
            <person name="Larsen T.S."/>
            <person name="Leather S."/>
            <person name="Moule S."/>
            <person name="O'Gaora P."/>
            <person name="Parry C."/>
            <person name="Quail M.A."/>
            <person name="Rutherford K.M."/>
            <person name="Simmonds M."/>
            <person name="Skelton J."/>
            <person name="Stevens K."/>
            <person name="Whitehead S."/>
            <person name="Barrell B.G."/>
        </authorList>
    </citation>
    <scope>NUCLEOTIDE SEQUENCE [LARGE SCALE GENOMIC DNA]</scope>
    <source>
        <strain>CT18</strain>
    </source>
</reference>
<reference key="2">
    <citation type="journal article" date="2003" name="J. Bacteriol.">
        <title>Comparative genomics of Salmonella enterica serovar Typhi strains Ty2 and CT18.</title>
        <authorList>
            <person name="Deng W."/>
            <person name="Liou S.-R."/>
            <person name="Plunkett G. III"/>
            <person name="Mayhew G.F."/>
            <person name="Rose D.J."/>
            <person name="Burland V."/>
            <person name="Kodoyianni V."/>
            <person name="Schwartz D.C."/>
            <person name="Blattner F.R."/>
        </authorList>
    </citation>
    <scope>NUCLEOTIDE SEQUENCE [LARGE SCALE GENOMIC DNA]</scope>
    <source>
        <strain>ATCC 700931 / Ty2</strain>
    </source>
</reference>
<protein>
    <recommendedName>
        <fullName evidence="1">Na(+)/H(+) antiporter NhaA</fullName>
    </recommendedName>
    <alternativeName>
        <fullName evidence="1">Sodium/proton antiporter NhaA</fullName>
    </alternativeName>
</protein>
<dbReference type="EMBL" id="AE014613">
    <property type="protein sequence ID" value="AAO67774.1"/>
    <property type="molecule type" value="Genomic_DNA"/>
</dbReference>
<dbReference type="EMBL" id="AL513382">
    <property type="protein sequence ID" value="CAD01194.1"/>
    <property type="molecule type" value="Genomic_DNA"/>
</dbReference>
<dbReference type="RefSeq" id="NP_454650.1">
    <property type="nucleotide sequence ID" value="NC_003198.1"/>
</dbReference>
<dbReference type="RefSeq" id="WP_000681337.1">
    <property type="nucleotide sequence ID" value="NZ_WSUR01000014.1"/>
</dbReference>
<dbReference type="SMR" id="Q8Z9N5"/>
<dbReference type="STRING" id="220341.gene:17584096"/>
<dbReference type="KEGG" id="stt:t0041"/>
<dbReference type="KEGG" id="sty:STY0047"/>
<dbReference type="PATRIC" id="fig|220341.7.peg.47"/>
<dbReference type="eggNOG" id="COG3004">
    <property type="taxonomic scope" value="Bacteria"/>
</dbReference>
<dbReference type="HOGENOM" id="CLU_015803_1_0_6"/>
<dbReference type="OMA" id="HGFGIPM"/>
<dbReference type="OrthoDB" id="9808135at2"/>
<dbReference type="Proteomes" id="UP000000541">
    <property type="component" value="Chromosome"/>
</dbReference>
<dbReference type="Proteomes" id="UP000002670">
    <property type="component" value="Chromosome"/>
</dbReference>
<dbReference type="GO" id="GO:0005886">
    <property type="term" value="C:plasma membrane"/>
    <property type="evidence" value="ECO:0007669"/>
    <property type="project" value="UniProtKB-SubCell"/>
</dbReference>
<dbReference type="GO" id="GO:0015385">
    <property type="term" value="F:sodium:proton antiporter activity"/>
    <property type="evidence" value="ECO:0007669"/>
    <property type="project" value="TreeGrafter"/>
</dbReference>
<dbReference type="GO" id="GO:0006885">
    <property type="term" value="P:regulation of pH"/>
    <property type="evidence" value="ECO:0007669"/>
    <property type="project" value="InterPro"/>
</dbReference>
<dbReference type="FunFam" id="1.20.1530.10:FF:000001">
    <property type="entry name" value="Na(+)/H(+) antiporter NhaA"/>
    <property type="match status" value="1"/>
</dbReference>
<dbReference type="Gene3D" id="1.20.1530.10">
    <property type="entry name" value="Na+/H+ antiporter like domain"/>
    <property type="match status" value="1"/>
</dbReference>
<dbReference type="HAMAP" id="MF_01844">
    <property type="entry name" value="NhaA"/>
    <property type="match status" value="1"/>
</dbReference>
<dbReference type="InterPro" id="IPR023171">
    <property type="entry name" value="Na/H_antiporter_dom_sf"/>
</dbReference>
<dbReference type="InterPro" id="IPR004670">
    <property type="entry name" value="NhaA"/>
</dbReference>
<dbReference type="NCBIfam" id="TIGR00773">
    <property type="entry name" value="NhaA"/>
    <property type="match status" value="1"/>
</dbReference>
<dbReference type="NCBIfam" id="NF007111">
    <property type="entry name" value="PRK09560.1"/>
    <property type="match status" value="1"/>
</dbReference>
<dbReference type="NCBIfam" id="NF007112">
    <property type="entry name" value="PRK09561.1"/>
    <property type="match status" value="1"/>
</dbReference>
<dbReference type="PANTHER" id="PTHR30341:SF0">
    <property type="entry name" value="NA(+)_H(+) ANTIPORTER NHAA"/>
    <property type="match status" value="1"/>
</dbReference>
<dbReference type="PANTHER" id="PTHR30341">
    <property type="entry name" value="SODIUM ION/PROTON ANTIPORTER NHAA-RELATED"/>
    <property type="match status" value="1"/>
</dbReference>
<dbReference type="Pfam" id="PF06965">
    <property type="entry name" value="Na_H_antiport_1"/>
    <property type="match status" value="1"/>
</dbReference>
<comment type="function">
    <text evidence="1">Na(+)/H(+) antiporter that extrudes sodium in exchange for external protons.</text>
</comment>
<comment type="catalytic activity">
    <reaction evidence="1">
        <text>Na(+)(in) + 2 H(+)(out) = Na(+)(out) + 2 H(+)(in)</text>
        <dbReference type="Rhea" id="RHEA:29251"/>
        <dbReference type="ChEBI" id="CHEBI:15378"/>
        <dbReference type="ChEBI" id="CHEBI:29101"/>
    </reaction>
    <physiologicalReaction direction="left-to-right" evidence="1">
        <dbReference type="Rhea" id="RHEA:29252"/>
    </physiologicalReaction>
</comment>
<comment type="subcellular location">
    <subcellularLocation>
        <location evidence="1">Cell inner membrane</location>
        <topology evidence="1">Multi-pass membrane protein</topology>
    </subcellularLocation>
</comment>
<comment type="similarity">
    <text evidence="1">Belongs to the NhaA Na(+)/H(+) (TC 2.A.33) antiporter family.</text>
</comment>
<accession>Q8Z9N5</accession>
<accession>Q7CBY9</accession>
<organism>
    <name type="scientific">Salmonella typhi</name>
    <dbReference type="NCBI Taxonomy" id="90370"/>
    <lineage>
        <taxon>Bacteria</taxon>
        <taxon>Pseudomonadati</taxon>
        <taxon>Pseudomonadota</taxon>
        <taxon>Gammaproteobacteria</taxon>
        <taxon>Enterobacterales</taxon>
        <taxon>Enterobacteriaceae</taxon>
        <taxon>Salmonella</taxon>
    </lineage>
</organism>
<sequence>MKHLHRFFSSDASGGIILIIAAALAMLMANMGATSGWYHDFLETPVQLRVGALEINKNMLLWINDALMAVFFLLIGLEVKRELMQGSLASLRQAAFPVIAAIGGMIVPALLYLAFNYSDPVTREGWAIPAATDIAFALGVLALLGSRVPLALKIFLMALAIIDDLGAIIIIALFYTSDLSIVSLGVAAFAIAVLALLNLCGVRRTGVYILVGAVLWTAVLKSGVHATLAGVIVGFFIPLKEKHGRSPAKRLEHVLHPWVAYLILPLFAFANAGVSLQGVTMDGLTSMLPLGIIAGLLIGKPLGISLFCWLALRFKLAHLPQGTTYQQIMAVGILCGIGFTMSIFIASLAFGNIDPELINWAKLGILIGSLLSAVVGYSWLRARLNAPA</sequence>
<gene>
    <name evidence="1" type="primary">nhaA</name>
    <name type="ordered locus">STY0047</name>
    <name type="ordered locus">t0041</name>
</gene>
<name>NHAA_SALTI</name>
<proteinExistence type="inferred from homology"/>
<feature type="chain" id="PRO_0000334416" description="Na(+)/H(+) antiporter NhaA">
    <location>
        <begin position="1"/>
        <end position="388"/>
    </location>
</feature>
<feature type="transmembrane region" description="Helical" evidence="1">
    <location>
        <begin position="14"/>
        <end position="34"/>
    </location>
</feature>
<feature type="transmembrane region" description="Helical" evidence="1">
    <location>
        <begin position="59"/>
        <end position="79"/>
    </location>
</feature>
<feature type="transmembrane region" description="Helical" evidence="1">
    <location>
        <begin position="95"/>
        <end position="115"/>
    </location>
</feature>
<feature type="transmembrane region" description="Helical" evidence="1">
    <location>
        <begin position="125"/>
        <end position="145"/>
    </location>
</feature>
<feature type="transmembrane region" description="Helical" evidence="1">
    <location>
        <begin position="154"/>
        <end position="174"/>
    </location>
</feature>
<feature type="transmembrane region" description="Helical" evidence="1">
    <location>
        <begin position="179"/>
        <end position="199"/>
    </location>
</feature>
<feature type="transmembrane region" description="Helical" evidence="1">
    <location>
        <begin position="219"/>
        <end position="239"/>
    </location>
</feature>
<feature type="transmembrane region" description="Helical" evidence="1">
    <location>
        <begin position="254"/>
        <end position="274"/>
    </location>
</feature>
<feature type="transmembrane region" description="Helical" evidence="1">
    <location>
        <begin position="292"/>
        <end position="312"/>
    </location>
</feature>
<feature type="transmembrane region" description="Helical" evidence="1">
    <location>
        <begin position="328"/>
        <end position="348"/>
    </location>
</feature>
<feature type="transmembrane region" description="Helical" evidence="1">
    <location>
        <begin position="360"/>
        <end position="380"/>
    </location>
</feature>
<evidence type="ECO:0000255" key="1">
    <source>
        <dbReference type="HAMAP-Rule" id="MF_01844"/>
    </source>
</evidence>
<keyword id="KW-0050">Antiport</keyword>
<keyword id="KW-0997">Cell inner membrane</keyword>
<keyword id="KW-1003">Cell membrane</keyword>
<keyword id="KW-0406">Ion transport</keyword>
<keyword id="KW-0472">Membrane</keyword>
<keyword id="KW-0915">Sodium</keyword>
<keyword id="KW-0739">Sodium transport</keyword>
<keyword id="KW-0812">Transmembrane</keyword>
<keyword id="KW-1133">Transmembrane helix</keyword>
<keyword id="KW-0813">Transport</keyword>